<proteinExistence type="inferred from homology"/>
<accession>B2UMU3</accession>
<evidence type="ECO:0000255" key="1">
    <source>
        <dbReference type="HAMAP-Rule" id="MF_00480"/>
    </source>
</evidence>
<evidence type="ECO:0000305" key="2"/>
<feature type="chain" id="PRO_1000125885" description="Small ribosomal subunit protein uS7">
    <location>
        <begin position="1"/>
        <end position="157"/>
    </location>
</feature>
<name>RS7_AKKM8</name>
<keyword id="KW-1185">Reference proteome</keyword>
<keyword id="KW-0687">Ribonucleoprotein</keyword>
<keyword id="KW-0689">Ribosomal protein</keyword>
<keyword id="KW-0694">RNA-binding</keyword>
<keyword id="KW-0699">rRNA-binding</keyword>
<keyword id="KW-0820">tRNA-binding</keyword>
<gene>
    <name evidence="1" type="primary">rpsG</name>
    <name type="ordered locus">Amuc_0307</name>
</gene>
<dbReference type="EMBL" id="CP001071">
    <property type="protein sequence ID" value="ACD04149.1"/>
    <property type="molecule type" value="Genomic_DNA"/>
</dbReference>
<dbReference type="RefSeq" id="WP_012419364.1">
    <property type="nucleotide sequence ID" value="NZ_CP071807.1"/>
</dbReference>
<dbReference type="SMR" id="B2UMU3"/>
<dbReference type="STRING" id="349741.Amuc_0307"/>
<dbReference type="PaxDb" id="349741-Amuc_0307"/>
<dbReference type="GeneID" id="60879785"/>
<dbReference type="KEGG" id="amu:Amuc_0307"/>
<dbReference type="eggNOG" id="COG0049">
    <property type="taxonomic scope" value="Bacteria"/>
</dbReference>
<dbReference type="HOGENOM" id="CLU_072226_1_1_0"/>
<dbReference type="OrthoDB" id="9807653at2"/>
<dbReference type="BioCyc" id="AMUC349741:G1GBX-349-MONOMER"/>
<dbReference type="Proteomes" id="UP000001031">
    <property type="component" value="Chromosome"/>
</dbReference>
<dbReference type="GO" id="GO:0015935">
    <property type="term" value="C:small ribosomal subunit"/>
    <property type="evidence" value="ECO:0007669"/>
    <property type="project" value="InterPro"/>
</dbReference>
<dbReference type="GO" id="GO:0019843">
    <property type="term" value="F:rRNA binding"/>
    <property type="evidence" value="ECO:0007669"/>
    <property type="project" value="UniProtKB-UniRule"/>
</dbReference>
<dbReference type="GO" id="GO:0003735">
    <property type="term" value="F:structural constituent of ribosome"/>
    <property type="evidence" value="ECO:0007669"/>
    <property type="project" value="InterPro"/>
</dbReference>
<dbReference type="GO" id="GO:0000049">
    <property type="term" value="F:tRNA binding"/>
    <property type="evidence" value="ECO:0007669"/>
    <property type="project" value="UniProtKB-UniRule"/>
</dbReference>
<dbReference type="GO" id="GO:0006412">
    <property type="term" value="P:translation"/>
    <property type="evidence" value="ECO:0007669"/>
    <property type="project" value="UniProtKB-UniRule"/>
</dbReference>
<dbReference type="CDD" id="cd14869">
    <property type="entry name" value="uS7_Bacteria"/>
    <property type="match status" value="1"/>
</dbReference>
<dbReference type="FunFam" id="1.10.455.10:FF:000001">
    <property type="entry name" value="30S ribosomal protein S7"/>
    <property type="match status" value="1"/>
</dbReference>
<dbReference type="Gene3D" id="1.10.455.10">
    <property type="entry name" value="Ribosomal protein S7 domain"/>
    <property type="match status" value="1"/>
</dbReference>
<dbReference type="HAMAP" id="MF_00480_B">
    <property type="entry name" value="Ribosomal_uS7_B"/>
    <property type="match status" value="1"/>
</dbReference>
<dbReference type="InterPro" id="IPR000235">
    <property type="entry name" value="Ribosomal_uS7"/>
</dbReference>
<dbReference type="InterPro" id="IPR005717">
    <property type="entry name" value="Ribosomal_uS7_bac/org-type"/>
</dbReference>
<dbReference type="InterPro" id="IPR020606">
    <property type="entry name" value="Ribosomal_uS7_CS"/>
</dbReference>
<dbReference type="InterPro" id="IPR023798">
    <property type="entry name" value="Ribosomal_uS7_dom"/>
</dbReference>
<dbReference type="InterPro" id="IPR036823">
    <property type="entry name" value="Ribosomal_uS7_dom_sf"/>
</dbReference>
<dbReference type="NCBIfam" id="TIGR01029">
    <property type="entry name" value="rpsG_bact"/>
    <property type="match status" value="1"/>
</dbReference>
<dbReference type="PANTHER" id="PTHR11205">
    <property type="entry name" value="RIBOSOMAL PROTEIN S7"/>
    <property type="match status" value="1"/>
</dbReference>
<dbReference type="Pfam" id="PF00177">
    <property type="entry name" value="Ribosomal_S7"/>
    <property type="match status" value="1"/>
</dbReference>
<dbReference type="PIRSF" id="PIRSF002122">
    <property type="entry name" value="RPS7p_RPS7a_RPS5e_RPS7o"/>
    <property type="match status" value="1"/>
</dbReference>
<dbReference type="SUPFAM" id="SSF47973">
    <property type="entry name" value="Ribosomal protein S7"/>
    <property type="match status" value="1"/>
</dbReference>
<dbReference type="PROSITE" id="PS00052">
    <property type="entry name" value="RIBOSOMAL_S7"/>
    <property type="match status" value="1"/>
</dbReference>
<comment type="function">
    <text evidence="1">One of the primary rRNA binding proteins, it binds directly to 16S rRNA where it nucleates assembly of the head domain of the 30S subunit. Is located at the subunit interface close to the decoding center, probably blocks exit of the E-site tRNA.</text>
</comment>
<comment type="subunit">
    <text evidence="1">Part of the 30S ribosomal subunit. Contacts proteins S9 and S11.</text>
</comment>
<comment type="similarity">
    <text evidence="1">Belongs to the universal ribosomal protein uS7 family.</text>
</comment>
<organism>
    <name type="scientific">Akkermansia muciniphila (strain ATCC BAA-835 / DSM 22959 / JCM 33894 / BCRC 81048 / CCUG 64013 / CIP 107961 / Muc)</name>
    <dbReference type="NCBI Taxonomy" id="349741"/>
    <lineage>
        <taxon>Bacteria</taxon>
        <taxon>Pseudomonadati</taxon>
        <taxon>Verrucomicrobiota</taxon>
        <taxon>Verrucomicrobiia</taxon>
        <taxon>Verrucomicrobiales</taxon>
        <taxon>Akkermansiaceae</taxon>
        <taxon>Akkermansia</taxon>
    </lineage>
</organism>
<protein>
    <recommendedName>
        <fullName evidence="1">Small ribosomal subunit protein uS7</fullName>
    </recommendedName>
    <alternativeName>
        <fullName evidence="2">30S ribosomal protein S7</fullName>
    </alternativeName>
</protein>
<reference key="1">
    <citation type="journal article" date="2011" name="PLoS ONE">
        <title>The genome of Akkermansia muciniphila, a dedicated intestinal mucin degrader, and its use in exploring intestinal metagenomes.</title>
        <authorList>
            <person name="van Passel M.W."/>
            <person name="Kant R."/>
            <person name="Zoetendal E.G."/>
            <person name="Plugge C.M."/>
            <person name="Derrien M."/>
            <person name="Malfatti S.A."/>
            <person name="Chain P.S."/>
            <person name="Woyke T."/>
            <person name="Palva A."/>
            <person name="de Vos W.M."/>
            <person name="Smidt H."/>
        </authorList>
    </citation>
    <scope>NUCLEOTIDE SEQUENCE [LARGE SCALE GENOMIC DNA]</scope>
    <source>
        <strain>ATCC BAA-835 / DSM 22959 / JCM 33894 / BCRC 81048 / CCUG 64013 / CIP 107961 / Muc</strain>
    </source>
</reference>
<sequence length="157" mass="17944">MARRKRVYRKIERRDPRYDSALVGKLISKVMLDGKRSLAERIVYAAIDMANEGTDSIDPLEVITRAIENAKPRVEVKSRRVGGATYQVPLEVDPARSESLAMRWIVNYARNRKGVPMHKALANEIKEAANNQGSSVRKRDDVHKMAQANRAFAHFRW</sequence>